<organism>
    <name type="scientific">Enterobacter agglomerans</name>
    <name type="common">Erwinia herbicola</name>
    <name type="synonym">Pantoea agglomerans</name>
    <dbReference type="NCBI Taxonomy" id="549"/>
    <lineage>
        <taxon>Bacteria</taxon>
        <taxon>Pseudomonadati</taxon>
        <taxon>Pseudomonadota</taxon>
        <taxon>Gammaproteobacteria</taxon>
        <taxon>Enterobacterales</taxon>
        <taxon>Erwiniaceae</taxon>
        <taxon>Pantoea</taxon>
        <taxon>Pantoea agglomerans group</taxon>
    </lineage>
</organism>
<dbReference type="EC" id="2.5.1.54"/>
<dbReference type="EMBL" id="X60420">
    <property type="protein sequence ID" value="CAA42951.1"/>
    <property type="molecule type" value="Genomic_DNA"/>
</dbReference>
<dbReference type="PIR" id="S26055">
    <property type="entry name" value="S26055"/>
</dbReference>
<dbReference type="SMR" id="Q02285"/>
<dbReference type="STRING" id="549.BEE12_02590"/>
<dbReference type="eggNOG" id="COG0722">
    <property type="taxonomic scope" value="Bacteria"/>
</dbReference>
<dbReference type="UniPathway" id="UPA00053">
    <property type="reaction ID" value="UER00084"/>
</dbReference>
<dbReference type="GO" id="GO:0005737">
    <property type="term" value="C:cytoplasm"/>
    <property type="evidence" value="ECO:0007669"/>
    <property type="project" value="TreeGrafter"/>
</dbReference>
<dbReference type="GO" id="GO:0003849">
    <property type="term" value="F:3-deoxy-7-phosphoheptulonate synthase activity"/>
    <property type="evidence" value="ECO:0007669"/>
    <property type="project" value="UniProtKB-EC"/>
</dbReference>
<dbReference type="GO" id="GO:0008652">
    <property type="term" value="P:amino acid biosynthetic process"/>
    <property type="evidence" value="ECO:0007669"/>
    <property type="project" value="UniProtKB-KW"/>
</dbReference>
<dbReference type="GO" id="GO:0009073">
    <property type="term" value="P:aromatic amino acid family biosynthetic process"/>
    <property type="evidence" value="ECO:0007669"/>
    <property type="project" value="UniProtKB-KW"/>
</dbReference>
<dbReference type="GO" id="GO:0009423">
    <property type="term" value="P:chorismate biosynthetic process"/>
    <property type="evidence" value="ECO:0007669"/>
    <property type="project" value="UniProtKB-UniPathway"/>
</dbReference>
<dbReference type="Gene3D" id="3.20.20.70">
    <property type="entry name" value="Aldolase class I"/>
    <property type="match status" value="1"/>
</dbReference>
<dbReference type="InterPro" id="IPR013785">
    <property type="entry name" value="Aldolase_TIM"/>
</dbReference>
<dbReference type="InterPro" id="IPR006218">
    <property type="entry name" value="DAHP1/KDSA"/>
</dbReference>
<dbReference type="InterPro" id="IPR006219">
    <property type="entry name" value="DAHP_synth_1"/>
</dbReference>
<dbReference type="NCBIfam" id="TIGR00034">
    <property type="entry name" value="aroFGH"/>
    <property type="match status" value="1"/>
</dbReference>
<dbReference type="PANTHER" id="PTHR21225">
    <property type="entry name" value="PHOSPHO-2-DEHYDRO-3-DEOXYHEPTONATE ALDOLASE DAHP SYNTHETASE"/>
    <property type="match status" value="1"/>
</dbReference>
<dbReference type="PANTHER" id="PTHR21225:SF10">
    <property type="entry name" value="PHOSPHO-2-DEHYDRO-3-DEOXYHEPTONATE ALDOLASE, TYR-SENSITIVE"/>
    <property type="match status" value="1"/>
</dbReference>
<dbReference type="Pfam" id="PF00793">
    <property type="entry name" value="DAHP_synth_1"/>
    <property type="match status" value="1"/>
</dbReference>
<dbReference type="SUPFAM" id="SSF51569">
    <property type="entry name" value="Aldolase"/>
    <property type="match status" value="1"/>
</dbReference>
<keyword id="KW-0028">Amino-acid biosynthesis</keyword>
<keyword id="KW-0057">Aromatic amino acid biosynthesis</keyword>
<keyword id="KW-0808">Transferase</keyword>
<protein>
    <recommendedName>
        <fullName>Phospho-2-dehydro-3-deoxyheptonate aldolase, Tyr-sensitive</fullName>
        <ecNumber>2.5.1.54</ecNumber>
    </recommendedName>
    <alternativeName>
        <fullName>3-deoxy-D-arabino-heptulosonate 7-phosphate synthase</fullName>
    </alternativeName>
    <alternativeName>
        <fullName>DAHP synthase</fullName>
    </alternativeName>
    <alternativeName>
        <fullName>Phospho-2-keto-3-deoxyheptonate aldolase</fullName>
    </alternativeName>
</protein>
<reference key="1">
    <citation type="journal article" date="1992" name="J. Gen. Microbiol.">
        <title>A monofunctional prephenate dehydrogenase created by cleavage of the 5' 109 bp of the tyrA gene from Erwinia herbicola.</title>
        <authorList>
            <person name="Xia T."/>
            <person name="Zhao G."/>
            <person name="Fischer R.S."/>
            <person name="Jensen R.A."/>
        </authorList>
    </citation>
    <scope>NUCLEOTIDE SEQUENCE [GENOMIC DNA]</scope>
</reference>
<name>AROF_ENTAG</name>
<evidence type="ECO:0000305" key="1"/>
<feature type="chain" id="PRO_0000140832" description="Phospho-2-dehydro-3-deoxyheptonate aldolase, Tyr-sensitive">
    <location>
        <begin position="1" status="less than"/>
        <end position="213"/>
    </location>
</feature>
<feature type="non-terminal residue">
    <location>
        <position position="1"/>
    </location>
</feature>
<proteinExistence type="inferred from homology"/>
<sequence>DPNSPQYLGDLFSWSAIGARTTESQTHREMASGLSMPVGFKNGTDGSLGTAINAMRAAAMPHRFVGINQAGQVCLLQTQGNPDGHVILRGGKAPNYGPEDVAQCEKEMLKAGLRPALMIDCSHGNSNKDYSRQPGVAESAIAQIKDGNRSIIGLMLESHINEGNQSSEQPRSEMKYGVSVTDACINWEVTETLLREMHQDLQGVLSARLSQEV</sequence>
<accession>Q02285</accession>
<gene>
    <name type="primary">aroF</name>
</gene>
<comment type="function">
    <text>Stereospecific condensation of phosphoenolpyruvate (PEP) and D-erythrose-4-phosphate (E4P) giving rise to 3-deoxy-D-arabino-heptulosonate-7-phosphate (DAHP).</text>
</comment>
<comment type="catalytic activity">
    <reaction>
        <text>D-erythrose 4-phosphate + phosphoenolpyruvate + H2O = 7-phospho-2-dehydro-3-deoxy-D-arabino-heptonate + phosphate</text>
        <dbReference type="Rhea" id="RHEA:14717"/>
        <dbReference type="ChEBI" id="CHEBI:15377"/>
        <dbReference type="ChEBI" id="CHEBI:16897"/>
        <dbReference type="ChEBI" id="CHEBI:43474"/>
        <dbReference type="ChEBI" id="CHEBI:58394"/>
        <dbReference type="ChEBI" id="CHEBI:58702"/>
        <dbReference type="EC" id="2.5.1.54"/>
    </reaction>
</comment>
<comment type="pathway">
    <text>Metabolic intermediate biosynthesis; chorismate biosynthesis; chorismate from D-erythrose 4-phosphate and phosphoenolpyruvate: step 1/7.</text>
</comment>
<comment type="miscellaneous">
    <text>There are 3 DAHP synthases, AroF is feedback-inhibited by Tyr. The other 2 DAHP synthases are Phe- and Trp-sensitive, respectively.</text>
</comment>
<comment type="similarity">
    <text evidence="1">Belongs to the class-I DAHP synthase family.</text>
</comment>